<feature type="chain" id="PRO_0000143926" description="Uridylate kinase">
    <location>
        <begin position="1"/>
        <end position="227"/>
    </location>
</feature>
<feature type="binding site" evidence="1">
    <location>
        <begin position="6"/>
        <end position="10"/>
    </location>
    <ligand>
        <name>ATP</name>
        <dbReference type="ChEBI" id="CHEBI:30616"/>
    </ligand>
</feature>
<feature type="binding site" evidence="1">
    <location>
        <position position="43"/>
    </location>
    <ligand>
        <name>UMP</name>
        <dbReference type="ChEBI" id="CHEBI:57865"/>
    </ligand>
</feature>
<feature type="binding site" evidence="1">
    <location>
        <position position="44"/>
    </location>
    <ligand>
        <name>ATP</name>
        <dbReference type="ChEBI" id="CHEBI:30616"/>
    </ligand>
</feature>
<feature type="binding site" evidence="1">
    <location>
        <position position="48"/>
    </location>
    <ligand>
        <name>ATP</name>
        <dbReference type="ChEBI" id="CHEBI:30616"/>
    </ligand>
</feature>
<feature type="binding site" evidence="1">
    <location>
        <position position="65"/>
    </location>
    <ligand>
        <name>UMP</name>
        <dbReference type="ChEBI" id="CHEBI:57865"/>
    </ligand>
</feature>
<feature type="binding site" evidence="1">
    <location>
        <begin position="113"/>
        <end position="119"/>
    </location>
    <ligand>
        <name>UMP</name>
        <dbReference type="ChEBI" id="CHEBI:57865"/>
    </ligand>
</feature>
<feature type="binding site" evidence="1">
    <location>
        <position position="139"/>
    </location>
    <ligand>
        <name>ATP</name>
        <dbReference type="ChEBI" id="CHEBI:30616"/>
    </ligand>
</feature>
<feature type="binding site" evidence="1">
    <location>
        <position position="140"/>
    </location>
    <ligand>
        <name>ATP</name>
        <dbReference type="ChEBI" id="CHEBI:30616"/>
    </ligand>
</feature>
<feature type="binding site" evidence="1">
    <location>
        <position position="145"/>
    </location>
    <ligand>
        <name>ATP</name>
        <dbReference type="ChEBI" id="CHEBI:30616"/>
    </ligand>
</feature>
<feature type="binding site" evidence="1">
    <location>
        <position position="148"/>
    </location>
    <ligand>
        <name>ATP</name>
        <dbReference type="ChEBI" id="CHEBI:30616"/>
    </ligand>
</feature>
<sequence>MKLTLKVSGKFFDEENSENLSLLRDVIIDLVNNGHRVAVVTGGGGTARRYISMGRKLNLNESHLDILGILVSRLNAQLLLFSLDNIAYPKVPESIEDFNERWASGKVVITGGFQPGQSTAGVAALVSEIINADYLVLATNVNGVYTKDPQKFVDAKLLPKLTVSELKTILEGSQSVNAGKYELLDPLAIKIVERSKIKVLVINFKDLNKLPNILKGNEILGSVVVPE</sequence>
<gene>
    <name evidence="1" type="primary">pyrH</name>
    <name type="ordered locus">Saci_1306</name>
</gene>
<accession>Q4J986</accession>
<dbReference type="EC" id="2.7.4.22" evidence="1"/>
<dbReference type="EMBL" id="CP000077">
    <property type="protein sequence ID" value="AAY80644.1"/>
    <property type="molecule type" value="Genomic_DNA"/>
</dbReference>
<dbReference type="RefSeq" id="WP_011278146.1">
    <property type="nucleotide sequence ID" value="NC_007181.1"/>
</dbReference>
<dbReference type="SMR" id="Q4J986"/>
<dbReference type="STRING" id="330779.Saci_1306"/>
<dbReference type="GeneID" id="14551811"/>
<dbReference type="GeneID" id="78441654"/>
<dbReference type="KEGG" id="sai:Saci_1306"/>
<dbReference type="PATRIC" id="fig|330779.12.peg.1260"/>
<dbReference type="eggNOG" id="arCOG00858">
    <property type="taxonomic scope" value="Archaea"/>
</dbReference>
<dbReference type="HOGENOM" id="CLU_079546_0_0_2"/>
<dbReference type="UniPathway" id="UPA00159">
    <property type="reaction ID" value="UER00275"/>
</dbReference>
<dbReference type="Proteomes" id="UP000001018">
    <property type="component" value="Chromosome"/>
</dbReference>
<dbReference type="GO" id="GO:0005737">
    <property type="term" value="C:cytoplasm"/>
    <property type="evidence" value="ECO:0007669"/>
    <property type="project" value="UniProtKB-SubCell"/>
</dbReference>
<dbReference type="GO" id="GO:0005524">
    <property type="term" value="F:ATP binding"/>
    <property type="evidence" value="ECO:0007669"/>
    <property type="project" value="UniProtKB-KW"/>
</dbReference>
<dbReference type="GO" id="GO:0033862">
    <property type="term" value="F:UMP kinase activity"/>
    <property type="evidence" value="ECO:0007669"/>
    <property type="project" value="UniProtKB-EC"/>
</dbReference>
<dbReference type="GO" id="GO:0044210">
    <property type="term" value="P:'de novo' CTP biosynthetic process"/>
    <property type="evidence" value="ECO:0007669"/>
    <property type="project" value="UniProtKB-UniRule"/>
</dbReference>
<dbReference type="GO" id="GO:0006225">
    <property type="term" value="P:UDP biosynthetic process"/>
    <property type="evidence" value="ECO:0007669"/>
    <property type="project" value="TreeGrafter"/>
</dbReference>
<dbReference type="FunFam" id="3.40.1160.10:FF:000030">
    <property type="entry name" value="Uridylate kinase"/>
    <property type="match status" value="1"/>
</dbReference>
<dbReference type="Gene3D" id="3.40.1160.10">
    <property type="entry name" value="Acetylglutamate kinase-like"/>
    <property type="match status" value="1"/>
</dbReference>
<dbReference type="HAMAP" id="MF_01220_A">
    <property type="entry name" value="PyrH_A"/>
    <property type="match status" value="1"/>
</dbReference>
<dbReference type="InterPro" id="IPR036393">
    <property type="entry name" value="AceGlu_kinase-like_sf"/>
</dbReference>
<dbReference type="InterPro" id="IPR001048">
    <property type="entry name" value="Asp/Glu/Uridylate_kinase"/>
</dbReference>
<dbReference type="InterPro" id="IPR011817">
    <property type="entry name" value="Uridylate_kinase"/>
</dbReference>
<dbReference type="InterPro" id="IPR011818">
    <property type="entry name" value="Uridylate_kinase_arch/spir"/>
</dbReference>
<dbReference type="NCBIfam" id="TIGR02076">
    <property type="entry name" value="pyrH_arch"/>
    <property type="match status" value="1"/>
</dbReference>
<dbReference type="PANTHER" id="PTHR42833">
    <property type="entry name" value="URIDYLATE KINASE"/>
    <property type="match status" value="1"/>
</dbReference>
<dbReference type="PANTHER" id="PTHR42833:SF4">
    <property type="entry name" value="URIDYLATE KINASE PUMPKIN, CHLOROPLASTIC"/>
    <property type="match status" value="1"/>
</dbReference>
<dbReference type="Pfam" id="PF00696">
    <property type="entry name" value="AA_kinase"/>
    <property type="match status" value="1"/>
</dbReference>
<dbReference type="PIRSF" id="PIRSF005650">
    <property type="entry name" value="Uridylate_kin"/>
    <property type="match status" value="1"/>
</dbReference>
<dbReference type="SUPFAM" id="SSF53633">
    <property type="entry name" value="Carbamate kinase-like"/>
    <property type="match status" value="1"/>
</dbReference>
<reference key="1">
    <citation type="journal article" date="2005" name="J. Bacteriol.">
        <title>The genome of Sulfolobus acidocaldarius, a model organism of the Crenarchaeota.</title>
        <authorList>
            <person name="Chen L."/>
            <person name="Bruegger K."/>
            <person name="Skovgaard M."/>
            <person name="Redder P."/>
            <person name="She Q."/>
            <person name="Torarinsson E."/>
            <person name="Greve B."/>
            <person name="Awayez M."/>
            <person name="Zibat A."/>
            <person name="Klenk H.-P."/>
            <person name="Garrett R.A."/>
        </authorList>
    </citation>
    <scope>NUCLEOTIDE SEQUENCE [LARGE SCALE GENOMIC DNA]</scope>
    <source>
        <strain>ATCC 33909 / DSM 639 / JCM 8929 / NBRC 15157 / NCIMB 11770</strain>
    </source>
</reference>
<protein>
    <recommendedName>
        <fullName evidence="1">Uridylate kinase</fullName>
        <shortName evidence="1">UK</shortName>
        <ecNumber evidence="1">2.7.4.22</ecNumber>
    </recommendedName>
    <alternativeName>
        <fullName evidence="1">Uridine monophosphate kinase</fullName>
        <shortName evidence="1">UMP kinase</shortName>
        <shortName evidence="1">UMPK</shortName>
    </alternativeName>
</protein>
<keyword id="KW-0067">ATP-binding</keyword>
<keyword id="KW-0963">Cytoplasm</keyword>
<keyword id="KW-0418">Kinase</keyword>
<keyword id="KW-0547">Nucleotide-binding</keyword>
<keyword id="KW-0665">Pyrimidine biosynthesis</keyword>
<keyword id="KW-1185">Reference proteome</keyword>
<keyword id="KW-0808">Transferase</keyword>
<organism>
    <name type="scientific">Sulfolobus acidocaldarius (strain ATCC 33909 / DSM 639 / JCM 8929 / NBRC 15157 / NCIMB 11770)</name>
    <dbReference type="NCBI Taxonomy" id="330779"/>
    <lineage>
        <taxon>Archaea</taxon>
        <taxon>Thermoproteota</taxon>
        <taxon>Thermoprotei</taxon>
        <taxon>Sulfolobales</taxon>
        <taxon>Sulfolobaceae</taxon>
        <taxon>Sulfolobus</taxon>
    </lineage>
</organism>
<evidence type="ECO:0000255" key="1">
    <source>
        <dbReference type="HAMAP-Rule" id="MF_01220"/>
    </source>
</evidence>
<comment type="function">
    <text evidence="1">Catalyzes the reversible phosphorylation of UMP to UDP.</text>
</comment>
<comment type="catalytic activity">
    <reaction evidence="1">
        <text>UMP + ATP = UDP + ADP</text>
        <dbReference type="Rhea" id="RHEA:24400"/>
        <dbReference type="ChEBI" id="CHEBI:30616"/>
        <dbReference type="ChEBI" id="CHEBI:57865"/>
        <dbReference type="ChEBI" id="CHEBI:58223"/>
        <dbReference type="ChEBI" id="CHEBI:456216"/>
        <dbReference type="EC" id="2.7.4.22"/>
    </reaction>
</comment>
<comment type="activity regulation">
    <text evidence="1">Inhibited by UTP.</text>
</comment>
<comment type="pathway">
    <text evidence="1">Pyrimidine metabolism; CTP biosynthesis via de novo pathway; UDP from UMP (UMPK route): step 1/1.</text>
</comment>
<comment type="subunit">
    <text evidence="1">Homohexamer.</text>
</comment>
<comment type="subcellular location">
    <subcellularLocation>
        <location evidence="1">Cytoplasm</location>
    </subcellularLocation>
</comment>
<comment type="similarity">
    <text evidence="1">Belongs to the UMP kinase family.</text>
</comment>
<name>PYRH_SULAC</name>
<proteinExistence type="inferred from homology"/>